<accession>P0C8J4</accession>
<keyword id="KW-1204">Blood coagulation cascade activating toxin</keyword>
<keyword id="KW-0106">Calcium</keyword>
<keyword id="KW-0903">Direct protein sequencing</keyword>
<keyword id="KW-1015">Disulfide bond</keyword>
<keyword id="KW-0325">Glycoprotein</keyword>
<keyword id="KW-1199">Hemostasis impairing toxin</keyword>
<keyword id="KW-0479">Metal-binding</keyword>
<keyword id="KW-0964">Secreted</keyword>
<keyword id="KW-0800">Toxin</keyword>
<sequence length="19" mass="2318">DFDCPPDWSAYDXQCYYAF</sequence>
<proteinExistence type="evidence at protein level"/>
<protein>
    <recommendedName>
        <fullName>Snaclec factor X-activator 2 light chain 1</fullName>
        <shortName>VAFXA-I LC1</shortName>
    </recommendedName>
</protein>
<organism>
    <name type="scientific">Vipera ammodytes ammodytes</name>
    <name type="common">Western sand viper</name>
    <dbReference type="NCBI Taxonomy" id="8705"/>
    <lineage>
        <taxon>Eukaryota</taxon>
        <taxon>Metazoa</taxon>
        <taxon>Chordata</taxon>
        <taxon>Craniata</taxon>
        <taxon>Vertebrata</taxon>
        <taxon>Euteleostomi</taxon>
        <taxon>Lepidosauria</taxon>
        <taxon>Squamata</taxon>
        <taxon>Bifurcata</taxon>
        <taxon>Unidentata</taxon>
        <taxon>Episquamata</taxon>
        <taxon>Toxicofera</taxon>
        <taxon>Serpentes</taxon>
        <taxon>Colubroidea</taxon>
        <taxon>Viperidae</taxon>
        <taxon>Viperinae</taxon>
        <taxon>Vipera</taxon>
    </lineage>
</organism>
<comment type="function">
    <text>Regulatory subunit of the blood coagulation factor X-activating enzyme. Activates coagulation factor X (F10) in a calcium-dependent manner by cleaving the Arg-Ile bond at position 234. Weakly hydrolyzes insulin B chain, fibrinogen and some components of the extracellular matrix in vitro, but does not activate prothrombin or plasminogen.</text>
</comment>
<comment type="subunit">
    <text>Heterotrimer; disulfide-linked. The heterotrimer consists of 1 heavy chain (a metalloproteinase) and 2 light chains: LC1 and LC2.</text>
</comment>
<comment type="subcellular location">
    <subcellularLocation>
        <location>Secreted</location>
    </subcellularLocation>
</comment>
<comment type="tissue specificity">
    <text>Expressed by the venom gland.</text>
</comment>
<comment type="PTM">
    <text>N-glycosylated.</text>
</comment>
<comment type="miscellaneous">
    <text>Calcium is required for ligand binding.</text>
</comment>
<comment type="similarity">
    <text evidence="2">Belongs to the snaclec family.</text>
</comment>
<dbReference type="GO" id="GO:0005576">
    <property type="term" value="C:extracellular region"/>
    <property type="evidence" value="ECO:0007669"/>
    <property type="project" value="UniProtKB-SubCell"/>
</dbReference>
<dbReference type="GO" id="GO:0046872">
    <property type="term" value="F:metal ion binding"/>
    <property type="evidence" value="ECO:0007669"/>
    <property type="project" value="UniProtKB-KW"/>
</dbReference>
<dbReference type="GO" id="GO:0090729">
    <property type="term" value="F:toxin activity"/>
    <property type="evidence" value="ECO:0007669"/>
    <property type="project" value="UniProtKB-KW"/>
</dbReference>
<evidence type="ECO:0000255" key="1">
    <source>
        <dbReference type="PROSITE-ProRule" id="PRU00040"/>
    </source>
</evidence>
<evidence type="ECO:0000305" key="2"/>
<reference key="1">
    <citation type="journal article" date="2008" name="Toxicon">
        <title>Two coagulation factor X activators from Vipera a. ammodytes venom with potential to treat patients with dysfunctional factors IXa or VIIa.</title>
        <authorList>
            <person name="Leonardi A."/>
            <person name="Fox J.W."/>
            <person name="Trampus-Bakija A."/>
            <person name="Krizaj I."/>
        </authorList>
    </citation>
    <scope>PROTEIN SEQUENCE</scope>
    <source>
        <tissue>Venom</tissue>
    </source>
</reference>
<name>SL2C1_VIPAA</name>
<feature type="chain" id="PRO_0000355314" description="Snaclec factor X-activator 2 light chain 1">
    <location>
        <begin position="1"/>
        <end position="19" status="greater than"/>
    </location>
</feature>
<feature type="domain" description="C-type lectin" evidence="1">
    <location>
        <begin position="11"/>
        <end position="19" status="greater than"/>
    </location>
</feature>
<feature type="disulfide bond" evidence="1">
    <location>
        <begin position="4"/>
        <end position="15"/>
    </location>
</feature>
<feature type="unsure residue" description="Assigned by comparison with orthologs">
    <location>
        <position position="4"/>
    </location>
</feature>
<feature type="unsure residue" description="Assigned by comparison with orthologs">
    <location>
        <position position="15"/>
    </location>
</feature>
<feature type="non-terminal residue">
    <location>
        <position position="19"/>
    </location>
</feature>